<accession>Q728G0</accession>
<feature type="chain" id="PRO_0000236992" description="Chaperone protein HtpG">
    <location>
        <begin position="1"/>
        <end position="637"/>
    </location>
</feature>
<feature type="region of interest" description="A; substrate-binding" evidence="1">
    <location>
        <begin position="1"/>
        <end position="330"/>
    </location>
</feature>
<feature type="region of interest" description="B" evidence="1">
    <location>
        <begin position="331"/>
        <end position="551"/>
    </location>
</feature>
<feature type="region of interest" description="C" evidence="1">
    <location>
        <begin position="552"/>
        <end position="637"/>
    </location>
</feature>
<keyword id="KW-0067">ATP-binding</keyword>
<keyword id="KW-0143">Chaperone</keyword>
<keyword id="KW-0963">Cytoplasm</keyword>
<keyword id="KW-0547">Nucleotide-binding</keyword>
<keyword id="KW-1185">Reference proteome</keyword>
<keyword id="KW-0346">Stress response</keyword>
<evidence type="ECO:0000255" key="1">
    <source>
        <dbReference type="HAMAP-Rule" id="MF_00505"/>
    </source>
</evidence>
<proteinExistence type="evidence at protein level"/>
<name>HTPG_NITV2</name>
<sequence length="637" mass="71660">MATAPASHAFRTEVRKMLHIITHSLYTNREIFLRELVSNASDALDKLRFIRSRGDAVVAPDLAPGIDISVDKEARILTIADTGVGMTRQELMDNLGTIARSGSEQFVADLAAAENAKDADAASIIGRFGVGFYAVFMVADRVEVTSRSYIEGEAAHTWTSDGLGEFTVEEATGDIPQRGTVIKAHLREDAAEFLEKYRIEGILRKHSQFISFPIRVDGEQVNTTPALWREPKFSITDEQYADFYKHLTFDTEAPLRTLHVSVDAPVQFTGLVFVPPHGQEVFSMGRDRWGLDLYVRRVLIQRENKDLLPEYLGFLKGIVDTEDLPLNISRETLQENVVVRKIGQTLTKQVLADLARLAADDAEAYATFWRQHGKVFKLGYSDYANREKFAPLLRFNSSHHDDAQGLTSLDDYISRAREGQKEIWYIAAPGREAARLDPRVEVFRRKGLEVLYLLEPIDEFVLETLDSYSDFSFKAVEHADGEKLAQFEDTGPARDVTPLTEDEDAAFARLIERMKALLGDAVEDVRISHRLADSPACLVQPGGASTSSMDRLLRVLHKDESVPRKVFEVNRDHPILRNLLKVFTSDASDPLVEDTTRQLFATSLMLDGYLKDPHELAAMMHRLMEKSGDWYKAVRGL</sequence>
<gene>
    <name evidence="1" type="primary">htpG</name>
    <name type="ordered locus">DVU_2643</name>
</gene>
<reference key="1">
    <citation type="journal article" date="2004" name="Nat. Biotechnol.">
        <title>The genome sequence of the anaerobic, sulfate-reducing bacterium Desulfovibrio vulgaris Hildenborough.</title>
        <authorList>
            <person name="Heidelberg J.F."/>
            <person name="Seshadri R."/>
            <person name="Haveman S.A."/>
            <person name="Hemme C.L."/>
            <person name="Paulsen I.T."/>
            <person name="Kolonay J.F."/>
            <person name="Eisen J.A."/>
            <person name="Ward N.L."/>
            <person name="Methe B.A."/>
            <person name="Brinkac L.M."/>
            <person name="Daugherty S.C."/>
            <person name="DeBoy R.T."/>
            <person name="Dodson R.J."/>
            <person name="Durkin A.S."/>
            <person name="Madupu R."/>
            <person name="Nelson W.C."/>
            <person name="Sullivan S.A."/>
            <person name="Fouts D.E."/>
            <person name="Haft D.H."/>
            <person name="Selengut J."/>
            <person name="Peterson J.D."/>
            <person name="Davidsen T.M."/>
            <person name="Zafar N."/>
            <person name="Zhou L."/>
            <person name="Radune D."/>
            <person name="Dimitrov G."/>
            <person name="Hance M."/>
            <person name="Tran K."/>
            <person name="Khouri H.M."/>
            <person name="Gill J."/>
            <person name="Utterback T.R."/>
            <person name="Feldblyum T.V."/>
            <person name="Wall J.D."/>
            <person name="Voordouw G."/>
            <person name="Fraser C.M."/>
        </authorList>
    </citation>
    <scope>NUCLEOTIDE SEQUENCE [LARGE SCALE GENOMIC DNA]</scope>
    <source>
        <strain>ATCC 29579 / DSM 644 / CCUG 34227 / NCIMB 8303 / VKM B-1760 / Hildenborough</strain>
    </source>
</reference>
<comment type="function">
    <text evidence="1">Molecular chaperone. Has ATPase activity.</text>
</comment>
<comment type="subunit">
    <text evidence="1">Homodimer.</text>
</comment>
<comment type="interaction">
    <interactant intactId="EBI-10066697">
        <id>Q728G0</id>
    </interactant>
    <interactant intactId="EBI-10066767">
        <id>Q728L5</id>
        <label>DVU_2588</label>
    </interactant>
    <organismsDiffer>false</organismsDiffer>
    <experiments>2</experiments>
</comment>
<comment type="interaction">
    <interactant intactId="EBI-10066697">
        <id>Q728G0</id>
    </interactant>
    <interactant intactId="EBI-10066693">
        <id>Q72BU5</id>
        <label>glpX</label>
    </interactant>
    <organismsDiffer>false</organismsDiffer>
    <experiments>4</experiments>
</comment>
<comment type="subcellular location">
    <subcellularLocation>
        <location evidence="1">Cytoplasm</location>
    </subcellularLocation>
</comment>
<comment type="similarity">
    <text evidence="1">Belongs to the heat shock protein 90 family.</text>
</comment>
<organism>
    <name type="scientific">Nitratidesulfovibrio vulgaris (strain ATCC 29579 / DSM 644 / CCUG 34227 / NCIMB 8303 / VKM B-1760 / Hildenborough)</name>
    <name type="common">Desulfovibrio vulgaris</name>
    <dbReference type="NCBI Taxonomy" id="882"/>
    <lineage>
        <taxon>Bacteria</taxon>
        <taxon>Pseudomonadati</taxon>
        <taxon>Thermodesulfobacteriota</taxon>
        <taxon>Desulfovibrionia</taxon>
        <taxon>Desulfovibrionales</taxon>
        <taxon>Desulfovibrionaceae</taxon>
        <taxon>Nitratidesulfovibrio</taxon>
    </lineage>
</organism>
<protein>
    <recommendedName>
        <fullName evidence="1">Chaperone protein HtpG</fullName>
    </recommendedName>
    <alternativeName>
        <fullName evidence="1">Heat shock protein HtpG</fullName>
    </alternativeName>
    <alternativeName>
        <fullName evidence="1">High temperature protein G</fullName>
    </alternativeName>
</protein>
<dbReference type="EMBL" id="AE017285">
    <property type="protein sequence ID" value="AAS97115.1"/>
    <property type="molecule type" value="Genomic_DNA"/>
</dbReference>
<dbReference type="RefSeq" id="WP_010939912.1">
    <property type="nucleotide sequence ID" value="NC_002937.3"/>
</dbReference>
<dbReference type="RefSeq" id="YP_011855.1">
    <property type="nucleotide sequence ID" value="NC_002937.3"/>
</dbReference>
<dbReference type="SMR" id="Q728G0"/>
<dbReference type="IntAct" id="Q728G0">
    <property type="interactions" value="4"/>
</dbReference>
<dbReference type="STRING" id="882.DVU_2643"/>
<dbReference type="PaxDb" id="882-DVU_2643"/>
<dbReference type="EnsemblBacteria" id="AAS97115">
    <property type="protein sequence ID" value="AAS97115"/>
    <property type="gene ID" value="DVU_2643"/>
</dbReference>
<dbReference type="KEGG" id="dvu:DVU_2643"/>
<dbReference type="PATRIC" id="fig|882.5.peg.2393"/>
<dbReference type="eggNOG" id="COG0326">
    <property type="taxonomic scope" value="Bacteria"/>
</dbReference>
<dbReference type="HOGENOM" id="CLU_006684_3_0_7"/>
<dbReference type="OrthoDB" id="9802640at2"/>
<dbReference type="PhylomeDB" id="Q728G0"/>
<dbReference type="Proteomes" id="UP000002194">
    <property type="component" value="Chromosome"/>
</dbReference>
<dbReference type="GO" id="GO:0005737">
    <property type="term" value="C:cytoplasm"/>
    <property type="evidence" value="ECO:0007669"/>
    <property type="project" value="UniProtKB-SubCell"/>
</dbReference>
<dbReference type="GO" id="GO:0005524">
    <property type="term" value="F:ATP binding"/>
    <property type="evidence" value="ECO:0007669"/>
    <property type="project" value="UniProtKB-UniRule"/>
</dbReference>
<dbReference type="GO" id="GO:0016887">
    <property type="term" value="F:ATP hydrolysis activity"/>
    <property type="evidence" value="ECO:0007669"/>
    <property type="project" value="InterPro"/>
</dbReference>
<dbReference type="GO" id="GO:0140662">
    <property type="term" value="F:ATP-dependent protein folding chaperone"/>
    <property type="evidence" value="ECO:0007669"/>
    <property type="project" value="InterPro"/>
</dbReference>
<dbReference type="GO" id="GO:0051082">
    <property type="term" value="F:unfolded protein binding"/>
    <property type="evidence" value="ECO:0007669"/>
    <property type="project" value="UniProtKB-UniRule"/>
</dbReference>
<dbReference type="CDD" id="cd16927">
    <property type="entry name" value="HATPase_Hsp90-like"/>
    <property type="match status" value="1"/>
</dbReference>
<dbReference type="Gene3D" id="3.30.230.80">
    <property type="match status" value="1"/>
</dbReference>
<dbReference type="Gene3D" id="3.40.50.11260">
    <property type="match status" value="1"/>
</dbReference>
<dbReference type="Gene3D" id="1.20.120.790">
    <property type="entry name" value="Heat shock protein 90, C-terminal domain"/>
    <property type="match status" value="1"/>
</dbReference>
<dbReference type="Gene3D" id="3.30.565.10">
    <property type="entry name" value="Histidine kinase-like ATPase, C-terminal domain"/>
    <property type="match status" value="1"/>
</dbReference>
<dbReference type="HAMAP" id="MF_00505">
    <property type="entry name" value="HSP90"/>
    <property type="match status" value="1"/>
</dbReference>
<dbReference type="InterPro" id="IPR036890">
    <property type="entry name" value="HATPase_C_sf"/>
</dbReference>
<dbReference type="InterPro" id="IPR019805">
    <property type="entry name" value="Heat_shock_protein_90_CS"/>
</dbReference>
<dbReference type="InterPro" id="IPR037196">
    <property type="entry name" value="HSP90_C"/>
</dbReference>
<dbReference type="InterPro" id="IPR001404">
    <property type="entry name" value="Hsp90_fam"/>
</dbReference>
<dbReference type="InterPro" id="IPR020575">
    <property type="entry name" value="Hsp90_N"/>
</dbReference>
<dbReference type="InterPro" id="IPR020568">
    <property type="entry name" value="Ribosomal_Su5_D2-typ_SF"/>
</dbReference>
<dbReference type="NCBIfam" id="NF003555">
    <property type="entry name" value="PRK05218.1"/>
    <property type="match status" value="1"/>
</dbReference>
<dbReference type="PANTHER" id="PTHR11528">
    <property type="entry name" value="HEAT SHOCK PROTEIN 90 FAMILY MEMBER"/>
    <property type="match status" value="1"/>
</dbReference>
<dbReference type="Pfam" id="PF13589">
    <property type="entry name" value="HATPase_c_3"/>
    <property type="match status" value="1"/>
</dbReference>
<dbReference type="Pfam" id="PF00183">
    <property type="entry name" value="HSP90"/>
    <property type="match status" value="1"/>
</dbReference>
<dbReference type="PIRSF" id="PIRSF002583">
    <property type="entry name" value="Hsp90"/>
    <property type="match status" value="1"/>
</dbReference>
<dbReference type="PRINTS" id="PR00775">
    <property type="entry name" value="HEATSHOCK90"/>
</dbReference>
<dbReference type="SUPFAM" id="SSF55874">
    <property type="entry name" value="ATPase domain of HSP90 chaperone/DNA topoisomerase II/histidine kinase"/>
    <property type="match status" value="1"/>
</dbReference>
<dbReference type="SUPFAM" id="SSF110942">
    <property type="entry name" value="HSP90 C-terminal domain"/>
    <property type="match status" value="1"/>
</dbReference>
<dbReference type="SUPFAM" id="SSF54211">
    <property type="entry name" value="Ribosomal protein S5 domain 2-like"/>
    <property type="match status" value="1"/>
</dbReference>
<dbReference type="PROSITE" id="PS00298">
    <property type="entry name" value="HSP90"/>
    <property type="match status" value="1"/>
</dbReference>